<keyword id="KW-0012">Acyltransferase</keyword>
<keyword id="KW-0963">Cytoplasm</keyword>
<keyword id="KW-0408">Iron</keyword>
<keyword id="KW-0479">Metal-binding</keyword>
<keyword id="KW-0808">Transferase</keyword>
<keyword id="KW-0819">tRNA processing</keyword>
<reference key="1">
    <citation type="journal article" date="2011" name="Appl. Environ. Microbiol.">
        <title>Genomic potential of Marinobacter aquaeolei, a biogeochemical 'opportunitroph'.</title>
        <authorList>
            <person name="Singer E."/>
            <person name="Webb E.A."/>
            <person name="Nelson W.C."/>
            <person name="Heidelberg J.F."/>
            <person name="Ivanova N."/>
            <person name="Pati A."/>
            <person name="Edwards K.J."/>
        </authorList>
    </citation>
    <scope>NUCLEOTIDE SEQUENCE [LARGE SCALE GENOMIC DNA]</scope>
    <source>
        <strain>ATCC 700491 / DSM 11845 / VT8</strain>
    </source>
</reference>
<evidence type="ECO:0000255" key="1">
    <source>
        <dbReference type="HAMAP-Rule" id="MF_01445"/>
    </source>
</evidence>
<organism>
    <name type="scientific">Marinobacter nauticus (strain ATCC 700491 / DSM 11845 / VT8)</name>
    <name type="common">Marinobacter aquaeolei</name>
    <dbReference type="NCBI Taxonomy" id="351348"/>
    <lineage>
        <taxon>Bacteria</taxon>
        <taxon>Pseudomonadati</taxon>
        <taxon>Pseudomonadota</taxon>
        <taxon>Gammaproteobacteria</taxon>
        <taxon>Pseudomonadales</taxon>
        <taxon>Marinobacteraceae</taxon>
        <taxon>Marinobacter</taxon>
    </lineage>
</organism>
<accession>A1TYE0</accession>
<comment type="function">
    <text evidence="1">Required for the formation of a threonylcarbamoyl group on adenosine at position 37 (t(6)A37) in tRNAs that read codons beginning with adenine. Is involved in the transfer of the threonylcarbamoyl moiety of threonylcarbamoyl-AMP (TC-AMP) to the N6 group of A37, together with TsaE and TsaB. TsaD likely plays a direct catalytic role in this reaction.</text>
</comment>
<comment type="catalytic activity">
    <reaction evidence="1">
        <text>L-threonylcarbamoyladenylate + adenosine(37) in tRNA = N(6)-L-threonylcarbamoyladenosine(37) in tRNA + AMP + H(+)</text>
        <dbReference type="Rhea" id="RHEA:37059"/>
        <dbReference type="Rhea" id="RHEA-COMP:10162"/>
        <dbReference type="Rhea" id="RHEA-COMP:10163"/>
        <dbReference type="ChEBI" id="CHEBI:15378"/>
        <dbReference type="ChEBI" id="CHEBI:73682"/>
        <dbReference type="ChEBI" id="CHEBI:74411"/>
        <dbReference type="ChEBI" id="CHEBI:74418"/>
        <dbReference type="ChEBI" id="CHEBI:456215"/>
        <dbReference type="EC" id="2.3.1.234"/>
    </reaction>
</comment>
<comment type="cofactor">
    <cofactor evidence="1">
        <name>Fe(2+)</name>
        <dbReference type="ChEBI" id="CHEBI:29033"/>
    </cofactor>
    <text evidence="1">Binds 1 Fe(2+) ion per subunit.</text>
</comment>
<comment type="subcellular location">
    <subcellularLocation>
        <location evidence="1">Cytoplasm</location>
    </subcellularLocation>
</comment>
<comment type="similarity">
    <text evidence="1">Belongs to the KAE1 / TsaD family.</text>
</comment>
<name>TSAD_MARN8</name>
<feature type="chain" id="PRO_0000303420" description="tRNA N6-adenosine threonylcarbamoyltransferase">
    <location>
        <begin position="1"/>
        <end position="351"/>
    </location>
</feature>
<feature type="binding site" evidence="1">
    <location>
        <position position="111"/>
    </location>
    <ligand>
        <name>Fe cation</name>
        <dbReference type="ChEBI" id="CHEBI:24875"/>
    </ligand>
</feature>
<feature type="binding site" evidence="1">
    <location>
        <position position="115"/>
    </location>
    <ligand>
        <name>Fe cation</name>
        <dbReference type="ChEBI" id="CHEBI:24875"/>
    </ligand>
</feature>
<feature type="binding site" evidence="1">
    <location>
        <begin position="134"/>
        <end position="138"/>
    </location>
    <ligand>
        <name>substrate</name>
    </ligand>
</feature>
<feature type="binding site" evidence="1">
    <location>
        <position position="167"/>
    </location>
    <ligand>
        <name>substrate</name>
    </ligand>
</feature>
<feature type="binding site" evidence="1">
    <location>
        <position position="180"/>
    </location>
    <ligand>
        <name>substrate</name>
    </ligand>
</feature>
<feature type="binding site" evidence="1">
    <location>
        <position position="276"/>
    </location>
    <ligand>
        <name>substrate</name>
    </ligand>
</feature>
<feature type="binding site" evidence="1">
    <location>
        <position position="304"/>
    </location>
    <ligand>
        <name>Fe cation</name>
        <dbReference type="ChEBI" id="CHEBI:24875"/>
    </ligand>
</feature>
<gene>
    <name evidence="1" type="primary">tsaD</name>
    <name type="synonym">gcp</name>
    <name type="ordered locus">Maqu_0661</name>
</gene>
<dbReference type="EC" id="2.3.1.234" evidence="1"/>
<dbReference type="EMBL" id="CP000514">
    <property type="protein sequence ID" value="ABM17759.1"/>
    <property type="molecule type" value="Genomic_DNA"/>
</dbReference>
<dbReference type="RefSeq" id="WP_011784191.1">
    <property type="nucleotide sequence ID" value="NC_008740.1"/>
</dbReference>
<dbReference type="SMR" id="A1TYE0"/>
<dbReference type="STRING" id="351348.Maqu_0661"/>
<dbReference type="KEGG" id="maq:Maqu_0661"/>
<dbReference type="eggNOG" id="COG0533">
    <property type="taxonomic scope" value="Bacteria"/>
</dbReference>
<dbReference type="HOGENOM" id="CLU_023208_0_0_6"/>
<dbReference type="OrthoDB" id="9806197at2"/>
<dbReference type="Proteomes" id="UP000000998">
    <property type="component" value="Chromosome"/>
</dbReference>
<dbReference type="GO" id="GO:0005737">
    <property type="term" value="C:cytoplasm"/>
    <property type="evidence" value="ECO:0007669"/>
    <property type="project" value="UniProtKB-SubCell"/>
</dbReference>
<dbReference type="GO" id="GO:0005506">
    <property type="term" value="F:iron ion binding"/>
    <property type="evidence" value="ECO:0007669"/>
    <property type="project" value="UniProtKB-UniRule"/>
</dbReference>
<dbReference type="GO" id="GO:0061711">
    <property type="term" value="F:N(6)-L-threonylcarbamoyladenine synthase activity"/>
    <property type="evidence" value="ECO:0007669"/>
    <property type="project" value="UniProtKB-EC"/>
</dbReference>
<dbReference type="GO" id="GO:0002949">
    <property type="term" value="P:tRNA threonylcarbamoyladenosine modification"/>
    <property type="evidence" value="ECO:0007669"/>
    <property type="project" value="UniProtKB-UniRule"/>
</dbReference>
<dbReference type="CDD" id="cd24133">
    <property type="entry name" value="ASKHA_NBD_TsaD_bac"/>
    <property type="match status" value="1"/>
</dbReference>
<dbReference type="FunFam" id="3.30.420.40:FF:000012">
    <property type="entry name" value="tRNA N6-adenosine threonylcarbamoyltransferase"/>
    <property type="match status" value="1"/>
</dbReference>
<dbReference type="FunFam" id="3.30.420.40:FF:000031">
    <property type="entry name" value="tRNA N6-adenosine threonylcarbamoyltransferase"/>
    <property type="match status" value="1"/>
</dbReference>
<dbReference type="Gene3D" id="3.30.420.40">
    <property type="match status" value="2"/>
</dbReference>
<dbReference type="HAMAP" id="MF_01445">
    <property type="entry name" value="TsaD"/>
    <property type="match status" value="1"/>
</dbReference>
<dbReference type="InterPro" id="IPR043129">
    <property type="entry name" value="ATPase_NBD"/>
</dbReference>
<dbReference type="InterPro" id="IPR000905">
    <property type="entry name" value="Gcp-like_dom"/>
</dbReference>
<dbReference type="InterPro" id="IPR017861">
    <property type="entry name" value="KAE1/TsaD"/>
</dbReference>
<dbReference type="InterPro" id="IPR022450">
    <property type="entry name" value="TsaD"/>
</dbReference>
<dbReference type="NCBIfam" id="TIGR00329">
    <property type="entry name" value="gcp_kae1"/>
    <property type="match status" value="1"/>
</dbReference>
<dbReference type="NCBIfam" id="TIGR03723">
    <property type="entry name" value="T6A_TsaD_YgjD"/>
    <property type="match status" value="1"/>
</dbReference>
<dbReference type="PANTHER" id="PTHR11735">
    <property type="entry name" value="TRNA N6-ADENOSINE THREONYLCARBAMOYLTRANSFERASE"/>
    <property type="match status" value="1"/>
</dbReference>
<dbReference type="PANTHER" id="PTHR11735:SF6">
    <property type="entry name" value="TRNA N6-ADENOSINE THREONYLCARBAMOYLTRANSFERASE, MITOCHONDRIAL"/>
    <property type="match status" value="1"/>
</dbReference>
<dbReference type="Pfam" id="PF00814">
    <property type="entry name" value="TsaD"/>
    <property type="match status" value="1"/>
</dbReference>
<dbReference type="PRINTS" id="PR00789">
    <property type="entry name" value="OSIALOPTASE"/>
</dbReference>
<dbReference type="SUPFAM" id="SSF53067">
    <property type="entry name" value="Actin-like ATPase domain"/>
    <property type="match status" value="2"/>
</dbReference>
<sequence length="351" mass="37303">MLILGIETSCDETGVALFDAQRGLLAHALYSQIGMHADYGGVVPELASRDHVRKLLPLCDEVLAQAGKARSDIEGIAYTAGPGLVGALMVGGSVAHALGFALGIPVLGVHHMEGHLLAPMLEDNPPAFPFVALLVSGGHTQLVRVDGIGEYQMLGESVDDAAGEAFDKTAKMLGLDYPGGPRVAALAEKGREGQYRFPRPMTDRPGLDFSFSGLKTFTLNTVNDAKDKGTLDEQVKADIALAFEAAVVDTLVIKCRRALEQTGCKRLVIAGGVSANKRLRASLEAMAEKLRGSVFYARPEFCTDNGAMIAYAGAQRLKAGQQDGERIVAVPRWPMNTLPPVAEPRQNGLVD</sequence>
<proteinExistence type="inferred from homology"/>
<protein>
    <recommendedName>
        <fullName evidence="1">tRNA N6-adenosine threonylcarbamoyltransferase</fullName>
        <ecNumber evidence="1">2.3.1.234</ecNumber>
    </recommendedName>
    <alternativeName>
        <fullName evidence="1">N6-L-threonylcarbamoyladenine synthase</fullName>
        <shortName evidence="1">t(6)A synthase</shortName>
    </alternativeName>
    <alternativeName>
        <fullName evidence="1">t(6)A37 threonylcarbamoyladenosine biosynthesis protein TsaD</fullName>
    </alternativeName>
    <alternativeName>
        <fullName evidence="1">tRNA threonylcarbamoyladenosine biosynthesis protein TsaD</fullName>
    </alternativeName>
</protein>